<keyword id="KW-1185">Reference proteome</keyword>
<keyword id="KW-0687">Ribonucleoprotein</keyword>
<keyword id="KW-0689">Ribosomal protein</keyword>
<keyword id="KW-0694">RNA-binding</keyword>
<keyword id="KW-0699">rRNA-binding</keyword>
<keyword id="KW-0820">tRNA-binding</keyword>
<proteinExistence type="inferred from homology"/>
<accession>A5EX97</accession>
<feature type="chain" id="PRO_0000306597" description="Small ribosomal subunit protein uS13">
    <location>
        <begin position="1"/>
        <end position="118"/>
    </location>
</feature>
<feature type="region of interest" description="Disordered" evidence="2">
    <location>
        <begin position="94"/>
        <end position="118"/>
    </location>
</feature>
<sequence>MARIAGINVPTQKHAVIALTSIYGIGTSRAKEICAKANVAPDKKIRDLSDSEVEALRQVVSEYQVEGDLRRQVSMDIKRLMDLGCFRGLRHRRSLPVRGQRTKTNARTRKGPRRPIKR</sequence>
<gene>
    <name evidence="1" type="primary">rpsM</name>
    <name type="ordered locus">DNO_1254</name>
</gene>
<protein>
    <recommendedName>
        <fullName evidence="1">Small ribosomal subunit protein uS13</fullName>
    </recommendedName>
    <alternativeName>
        <fullName evidence="3">30S ribosomal protein S13</fullName>
    </alternativeName>
</protein>
<comment type="function">
    <text evidence="1">Located at the top of the head of the 30S subunit, it contacts several helices of the 16S rRNA. In the 70S ribosome it contacts the 23S rRNA (bridge B1a) and protein L5 of the 50S subunit (bridge B1b), connecting the 2 subunits; these bridges are implicated in subunit movement. Contacts the tRNAs in the A and P-sites.</text>
</comment>
<comment type="subunit">
    <text evidence="1">Part of the 30S ribosomal subunit. Forms a loose heterodimer with protein S19. Forms two bridges to the 50S subunit in the 70S ribosome.</text>
</comment>
<comment type="similarity">
    <text evidence="1">Belongs to the universal ribosomal protein uS13 family.</text>
</comment>
<name>RS13_DICNV</name>
<evidence type="ECO:0000255" key="1">
    <source>
        <dbReference type="HAMAP-Rule" id="MF_01315"/>
    </source>
</evidence>
<evidence type="ECO:0000256" key="2">
    <source>
        <dbReference type="SAM" id="MobiDB-lite"/>
    </source>
</evidence>
<evidence type="ECO:0000305" key="3"/>
<reference key="1">
    <citation type="journal article" date="2007" name="Nat. Biotechnol.">
        <title>Genome sequence and identification of candidate vaccine antigens from the animal pathogen Dichelobacter nodosus.</title>
        <authorList>
            <person name="Myers G.S.A."/>
            <person name="Parker D."/>
            <person name="Al-Hasani K."/>
            <person name="Kennan R.M."/>
            <person name="Seemann T."/>
            <person name="Ren Q."/>
            <person name="Badger J.H."/>
            <person name="Selengut J.D."/>
            <person name="Deboy R.T."/>
            <person name="Tettelin H."/>
            <person name="Boyce J.D."/>
            <person name="McCarl V.P."/>
            <person name="Han X."/>
            <person name="Nelson W.C."/>
            <person name="Madupu R."/>
            <person name="Mohamoud Y."/>
            <person name="Holley T."/>
            <person name="Fedorova N."/>
            <person name="Khouri H."/>
            <person name="Bottomley S.P."/>
            <person name="Whittington R.J."/>
            <person name="Adler B."/>
            <person name="Songer J.G."/>
            <person name="Rood J.I."/>
            <person name="Paulsen I.T."/>
        </authorList>
    </citation>
    <scope>NUCLEOTIDE SEQUENCE [LARGE SCALE GENOMIC DNA]</scope>
    <source>
        <strain>VCS1703A</strain>
    </source>
</reference>
<dbReference type="EMBL" id="CP000513">
    <property type="protein sequence ID" value="ABQ13924.1"/>
    <property type="molecule type" value="Genomic_DNA"/>
</dbReference>
<dbReference type="RefSeq" id="WP_012031549.1">
    <property type="nucleotide sequence ID" value="NC_009446.1"/>
</dbReference>
<dbReference type="SMR" id="A5EX97"/>
<dbReference type="STRING" id="246195.DNO_1254"/>
<dbReference type="KEGG" id="dno:DNO_1254"/>
<dbReference type="eggNOG" id="COG0099">
    <property type="taxonomic scope" value="Bacteria"/>
</dbReference>
<dbReference type="HOGENOM" id="CLU_103849_1_2_6"/>
<dbReference type="OrthoDB" id="9803610at2"/>
<dbReference type="Proteomes" id="UP000000248">
    <property type="component" value="Chromosome"/>
</dbReference>
<dbReference type="GO" id="GO:0005829">
    <property type="term" value="C:cytosol"/>
    <property type="evidence" value="ECO:0007669"/>
    <property type="project" value="TreeGrafter"/>
</dbReference>
<dbReference type="GO" id="GO:0015935">
    <property type="term" value="C:small ribosomal subunit"/>
    <property type="evidence" value="ECO:0007669"/>
    <property type="project" value="TreeGrafter"/>
</dbReference>
<dbReference type="GO" id="GO:0019843">
    <property type="term" value="F:rRNA binding"/>
    <property type="evidence" value="ECO:0007669"/>
    <property type="project" value="UniProtKB-UniRule"/>
</dbReference>
<dbReference type="GO" id="GO:0003735">
    <property type="term" value="F:structural constituent of ribosome"/>
    <property type="evidence" value="ECO:0007669"/>
    <property type="project" value="InterPro"/>
</dbReference>
<dbReference type="GO" id="GO:0000049">
    <property type="term" value="F:tRNA binding"/>
    <property type="evidence" value="ECO:0007669"/>
    <property type="project" value="UniProtKB-UniRule"/>
</dbReference>
<dbReference type="GO" id="GO:0006412">
    <property type="term" value="P:translation"/>
    <property type="evidence" value="ECO:0007669"/>
    <property type="project" value="UniProtKB-UniRule"/>
</dbReference>
<dbReference type="FunFam" id="1.10.8.50:FF:000001">
    <property type="entry name" value="30S ribosomal protein S13"/>
    <property type="match status" value="1"/>
</dbReference>
<dbReference type="FunFam" id="4.10.910.10:FF:000001">
    <property type="entry name" value="30S ribosomal protein S13"/>
    <property type="match status" value="1"/>
</dbReference>
<dbReference type="Gene3D" id="1.10.8.50">
    <property type="match status" value="1"/>
</dbReference>
<dbReference type="Gene3D" id="4.10.910.10">
    <property type="entry name" value="30s ribosomal protein s13, domain 2"/>
    <property type="match status" value="1"/>
</dbReference>
<dbReference type="HAMAP" id="MF_01315">
    <property type="entry name" value="Ribosomal_uS13"/>
    <property type="match status" value="1"/>
</dbReference>
<dbReference type="InterPro" id="IPR027437">
    <property type="entry name" value="Rbsml_uS13_C"/>
</dbReference>
<dbReference type="InterPro" id="IPR001892">
    <property type="entry name" value="Ribosomal_uS13"/>
</dbReference>
<dbReference type="InterPro" id="IPR010979">
    <property type="entry name" value="Ribosomal_uS13-like_H2TH"/>
</dbReference>
<dbReference type="InterPro" id="IPR019980">
    <property type="entry name" value="Ribosomal_uS13_bac-type"/>
</dbReference>
<dbReference type="InterPro" id="IPR018269">
    <property type="entry name" value="Ribosomal_uS13_CS"/>
</dbReference>
<dbReference type="NCBIfam" id="TIGR03631">
    <property type="entry name" value="uS13_bact"/>
    <property type="match status" value="1"/>
</dbReference>
<dbReference type="PANTHER" id="PTHR10871">
    <property type="entry name" value="30S RIBOSOMAL PROTEIN S13/40S RIBOSOMAL PROTEIN S18"/>
    <property type="match status" value="1"/>
</dbReference>
<dbReference type="PANTHER" id="PTHR10871:SF1">
    <property type="entry name" value="SMALL RIBOSOMAL SUBUNIT PROTEIN US13M"/>
    <property type="match status" value="1"/>
</dbReference>
<dbReference type="Pfam" id="PF00416">
    <property type="entry name" value="Ribosomal_S13"/>
    <property type="match status" value="1"/>
</dbReference>
<dbReference type="PIRSF" id="PIRSF002134">
    <property type="entry name" value="Ribosomal_S13"/>
    <property type="match status" value="1"/>
</dbReference>
<dbReference type="SUPFAM" id="SSF46946">
    <property type="entry name" value="S13-like H2TH domain"/>
    <property type="match status" value="1"/>
</dbReference>
<dbReference type="PROSITE" id="PS00646">
    <property type="entry name" value="RIBOSOMAL_S13_1"/>
    <property type="match status" value="1"/>
</dbReference>
<dbReference type="PROSITE" id="PS50159">
    <property type="entry name" value="RIBOSOMAL_S13_2"/>
    <property type="match status" value="1"/>
</dbReference>
<organism>
    <name type="scientific">Dichelobacter nodosus (strain VCS1703A)</name>
    <dbReference type="NCBI Taxonomy" id="246195"/>
    <lineage>
        <taxon>Bacteria</taxon>
        <taxon>Pseudomonadati</taxon>
        <taxon>Pseudomonadota</taxon>
        <taxon>Gammaproteobacteria</taxon>
        <taxon>Cardiobacteriales</taxon>
        <taxon>Cardiobacteriaceae</taxon>
        <taxon>Dichelobacter</taxon>
    </lineage>
</organism>